<name>PURA_CALS8</name>
<keyword id="KW-0963">Cytoplasm</keyword>
<keyword id="KW-0342">GTP-binding</keyword>
<keyword id="KW-0436">Ligase</keyword>
<keyword id="KW-0460">Magnesium</keyword>
<keyword id="KW-0479">Metal-binding</keyword>
<keyword id="KW-0547">Nucleotide-binding</keyword>
<keyword id="KW-0658">Purine biosynthesis</keyword>
<protein>
    <recommendedName>
        <fullName evidence="1">Adenylosuccinate synthetase</fullName>
        <shortName evidence="1">AMPSase</shortName>
        <shortName evidence="1">AdSS</shortName>
        <ecNumber evidence="1">6.3.4.4</ecNumber>
    </recommendedName>
    <alternativeName>
        <fullName evidence="1">IMP--aspartate ligase</fullName>
    </alternativeName>
</protein>
<proteinExistence type="inferred from homology"/>
<feature type="chain" id="PRO_0000321796" description="Adenylosuccinate synthetase">
    <location>
        <begin position="1"/>
        <end position="427"/>
    </location>
</feature>
<feature type="region of interest" description="Disordered" evidence="2">
    <location>
        <begin position="117"/>
        <end position="137"/>
    </location>
</feature>
<feature type="active site" description="Proton acceptor" evidence="1">
    <location>
        <position position="14"/>
    </location>
</feature>
<feature type="active site" description="Proton donor" evidence="1">
    <location>
        <position position="42"/>
    </location>
</feature>
<feature type="binding site" evidence="1">
    <location>
        <begin position="13"/>
        <end position="19"/>
    </location>
    <ligand>
        <name>GTP</name>
        <dbReference type="ChEBI" id="CHEBI:37565"/>
    </ligand>
</feature>
<feature type="binding site" description="in other chain" evidence="1">
    <location>
        <begin position="14"/>
        <end position="17"/>
    </location>
    <ligand>
        <name>IMP</name>
        <dbReference type="ChEBI" id="CHEBI:58053"/>
        <note>ligand shared between dimeric partners</note>
    </ligand>
</feature>
<feature type="binding site" evidence="1">
    <location>
        <position position="14"/>
    </location>
    <ligand>
        <name>Mg(2+)</name>
        <dbReference type="ChEBI" id="CHEBI:18420"/>
    </ligand>
</feature>
<feature type="binding site" description="in other chain" evidence="1">
    <location>
        <begin position="39"/>
        <end position="42"/>
    </location>
    <ligand>
        <name>IMP</name>
        <dbReference type="ChEBI" id="CHEBI:58053"/>
        <note>ligand shared between dimeric partners</note>
    </ligand>
</feature>
<feature type="binding site" evidence="1">
    <location>
        <begin position="41"/>
        <end position="43"/>
    </location>
    <ligand>
        <name>GTP</name>
        <dbReference type="ChEBI" id="CHEBI:37565"/>
    </ligand>
</feature>
<feature type="binding site" evidence="1">
    <location>
        <position position="41"/>
    </location>
    <ligand>
        <name>Mg(2+)</name>
        <dbReference type="ChEBI" id="CHEBI:18420"/>
    </ligand>
</feature>
<feature type="binding site" description="in other chain" evidence="1">
    <location>
        <position position="129"/>
    </location>
    <ligand>
        <name>IMP</name>
        <dbReference type="ChEBI" id="CHEBI:58053"/>
        <note>ligand shared between dimeric partners</note>
    </ligand>
</feature>
<feature type="binding site" evidence="1">
    <location>
        <position position="143"/>
    </location>
    <ligand>
        <name>IMP</name>
        <dbReference type="ChEBI" id="CHEBI:58053"/>
        <note>ligand shared between dimeric partners</note>
    </ligand>
</feature>
<feature type="binding site" description="in other chain" evidence="1">
    <location>
        <position position="224"/>
    </location>
    <ligand>
        <name>IMP</name>
        <dbReference type="ChEBI" id="CHEBI:58053"/>
        <note>ligand shared between dimeric partners</note>
    </ligand>
</feature>
<feature type="binding site" description="in other chain" evidence="1">
    <location>
        <position position="239"/>
    </location>
    <ligand>
        <name>IMP</name>
        <dbReference type="ChEBI" id="CHEBI:58053"/>
        <note>ligand shared between dimeric partners</note>
    </ligand>
</feature>
<feature type="binding site" evidence="1">
    <location>
        <begin position="299"/>
        <end position="305"/>
    </location>
    <ligand>
        <name>substrate</name>
    </ligand>
</feature>
<feature type="binding site" description="in other chain" evidence="1">
    <location>
        <position position="303"/>
    </location>
    <ligand>
        <name>IMP</name>
        <dbReference type="ChEBI" id="CHEBI:58053"/>
        <note>ligand shared between dimeric partners</note>
    </ligand>
</feature>
<feature type="binding site" evidence="1">
    <location>
        <position position="305"/>
    </location>
    <ligand>
        <name>GTP</name>
        <dbReference type="ChEBI" id="CHEBI:37565"/>
    </ligand>
</feature>
<feature type="binding site" evidence="1">
    <location>
        <begin position="331"/>
        <end position="333"/>
    </location>
    <ligand>
        <name>GTP</name>
        <dbReference type="ChEBI" id="CHEBI:37565"/>
    </ligand>
</feature>
<feature type="binding site" evidence="1">
    <location>
        <begin position="414"/>
        <end position="416"/>
    </location>
    <ligand>
        <name>GTP</name>
        <dbReference type="ChEBI" id="CHEBI:37565"/>
    </ligand>
</feature>
<comment type="function">
    <text evidence="1">Plays an important role in the de novo pathway of purine nucleotide biosynthesis. Catalyzes the first committed step in the biosynthesis of AMP from IMP.</text>
</comment>
<comment type="catalytic activity">
    <reaction evidence="1">
        <text>IMP + L-aspartate + GTP = N(6)-(1,2-dicarboxyethyl)-AMP + GDP + phosphate + 2 H(+)</text>
        <dbReference type="Rhea" id="RHEA:15753"/>
        <dbReference type="ChEBI" id="CHEBI:15378"/>
        <dbReference type="ChEBI" id="CHEBI:29991"/>
        <dbReference type="ChEBI" id="CHEBI:37565"/>
        <dbReference type="ChEBI" id="CHEBI:43474"/>
        <dbReference type="ChEBI" id="CHEBI:57567"/>
        <dbReference type="ChEBI" id="CHEBI:58053"/>
        <dbReference type="ChEBI" id="CHEBI:58189"/>
        <dbReference type="EC" id="6.3.4.4"/>
    </reaction>
</comment>
<comment type="cofactor">
    <cofactor evidence="1">
        <name>Mg(2+)</name>
        <dbReference type="ChEBI" id="CHEBI:18420"/>
    </cofactor>
    <text evidence="1">Binds 1 Mg(2+) ion per subunit.</text>
</comment>
<comment type="pathway">
    <text evidence="1">Purine metabolism; AMP biosynthesis via de novo pathway; AMP from IMP: step 1/2.</text>
</comment>
<comment type="subunit">
    <text evidence="1">Homodimer.</text>
</comment>
<comment type="subcellular location">
    <subcellularLocation>
        <location evidence="1">Cytoplasm</location>
    </subcellularLocation>
</comment>
<comment type="similarity">
    <text evidence="1">Belongs to the adenylosuccinate synthetase family.</text>
</comment>
<evidence type="ECO:0000255" key="1">
    <source>
        <dbReference type="HAMAP-Rule" id="MF_00011"/>
    </source>
</evidence>
<evidence type="ECO:0000256" key="2">
    <source>
        <dbReference type="SAM" id="MobiDB-lite"/>
    </source>
</evidence>
<organism>
    <name type="scientific">Caldicellulosiruptor saccharolyticus (strain ATCC 43494 / DSM 8903 / Tp8T 6331)</name>
    <dbReference type="NCBI Taxonomy" id="351627"/>
    <lineage>
        <taxon>Bacteria</taxon>
        <taxon>Bacillati</taxon>
        <taxon>Bacillota</taxon>
        <taxon>Bacillota incertae sedis</taxon>
        <taxon>Caldicellulosiruptorales</taxon>
        <taxon>Caldicellulosiruptoraceae</taxon>
        <taxon>Caldicellulosiruptor</taxon>
    </lineage>
</organism>
<gene>
    <name evidence="1" type="primary">purA</name>
    <name type="ordered locus">Csac_2578</name>
</gene>
<reference key="1">
    <citation type="submission" date="2007-04" db="EMBL/GenBank/DDBJ databases">
        <title>Genome sequence of the thermophilic hydrogen-producing bacterium Caldicellulosiruptor saccharolyticus DSM 8903.</title>
        <authorList>
            <person name="Copeland A."/>
            <person name="Lucas S."/>
            <person name="Lapidus A."/>
            <person name="Barry K."/>
            <person name="Detter J.C."/>
            <person name="Glavina del Rio T."/>
            <person name="Hammon N."/>
            <person name="Israni S."/>
            <person name="Dalin E."/>
            <person name="Tice H."/>
            <person name="Pitluck S."/>
            <person name="Kiss H."/>
            <person name="Brettin T."/>
            <person name="Bruce D."/>
            <person name="Han C."/>
            <person name="Schmutz J."/>
            <person name="Larimer F."/>
            <person name="Land M."/>
            <person name="Hauser L."/>
            <person name="Kyrpides N."/>
            <person name="Lykidis A."/>
            <person name="van de Werken H.J.G."/>
            <person name="Verhaart M.R.A."/>
            <person name="VanFossen A.L."/>
            <person name="Lewis D.L."/>
            <person name="Nichols J.D."/>
            <person name="Goorissen H.P."/>
            <person name="van Niel E.W.J."/>
            <person name="Stams F.J.M."/>
            <person name="Willquist K.U."/>
            <person name="Ward D.E."/>
            <person name="van der Oost J."/>
            <person name="Kelly R.M."/>
            <person name="Kengen S.M.W."/>
            <person name="Richardson P."/>
        </authorList>
    </citation>
    <scope>NUCLEOTIDE SEQUENCE [LARGE SCALE GENOMIC DNA]</scope>
    <source>
        <strain>ATCC 43494 / DSM 8903 / Tp8T 6331</strain>
    </source>
</reference>
<sequence>MSQIRAIVGTQWGDEGKGKIVDFLAKEADVVVRAQGGSNAGHTVEAFGKIFKLHLIPSGILYKDKINIIGNGVVIDPESLIEEIESLQKEGISTENLRISDRAHLVMPYHKILDEEQEKQRGEESLGTTKRGIGPAYTDKTERTNLRVCDMLDEDEFVHKLRIVYERKNRILTEVYHKTPMKFGELLEQFMKYGEILRPYITDTIKLLNDAIKEGKKILLEGAQATMLDLDYGTYPYVTSSHPTVGGFCIGAGIAPKHIQEVIGVVKSYTTRVGKGPFPTELLDRVGDSIRERGKEYGTTTGRPRRCGWLDLVVVRYAVLINGIDKIALTKLDTLSNLPKVKVCVGYRHAGKILDLFPASLKVAMECEPIYEEFDGWSEEEIKKAKEYDQLPKNAKKYIEFIEKETGAKVFLIGTGASREDIIIKEN</sequence>
<dbReference type="EC" id="6.3.4.4" evidence="1"/>
<dbReference type="EMBL" id="CP000679">
    <property type="protein sequence ID" value="ABP68151.1"/>
    <property type="molecule type" value="Genomic_DNA"/>
</dbReference>
<dbReference type="RefSeq" id="WP_011918069.1">
    <property type="nucleotide sequence ID" value="NC_009437.1"/>
</dbReference>
<dbReference type="SMR" id="A4XML6"/>
<dbReference type="STRING" id="351627.Csac_2578"/>
<dbReference type="KEGG" id="csc:Csac_2578"/>
<dbReference type="eggNOG" id="COG0104">
    <property type="taxonomic scope" value="Bacteria"/>
</dbReference>
<dbReference type="HOGENOM" id="CLU_029848_0_0_9"/>
<dbReference type="OrthoDB" id="9807553at2"/>
<dbReference type="UniPathway" id="UPA00075">
    <property type="reaction ID" value="UER00335"/>
</dbReference>
<dbReference type="Proteomes" id="UP000000256">
    <property type="component" value="Chromosome"/>
</dbReference>
<dbReference type="GO" id="GO:0005737">
    <property type="term" value="C:cytoplasm"/>
    <property type="evidence" value="ECO:0007669"/>
    <property type="project" value="UniProtKB-SubCell"/>
</dbReference>
<dbReference type="GO" id="GO:0004019">
    <property type="term" value="F:adenylosuccinate synthase activity"/>
    <property type="evidence" value="ECO:0007669"/>
    <property type="project" value="UniProtKB-UniRule"/>
</dbReference>
<dbReference type="GO" id="GO:0005525">
    <property type="term" value="F:GTP binding"/>
    <property type="evidence" value="ECO:0007669"/>
    <property type="project" value="UniProtKB-UniRule"/>
</dbReference>
<dbReference type="GO" id="GO:0000287">
    <property type="term" value="F:magnesium ion binding"/>
    <property type="evidence" value="ECO:0007669"/>
    <property type="project" value="UniProtKB-UniRule"/>
</dbReference>
<dbReference type="GO" id="GO:0044208">
    <property type="term" value="P:'de novo' AMP biosynthetic process"/>
    <property type="evidence" value="ECO:0007669"/>
    <property type="project" value="UniProtKB-UniRule"/>
</dbReference>
<dbReference type="GO" id="GO:0046040">
    <property type="term" value="P:IMP metabolic process"/>
    <property type="evidence" value="ECO:0007669"/>
    <property type="project" value="TreeGrafter"/>
</dbReference>
<dbReference type="CDD" id="cd03108">
    <property type="entry name" value="AdSS"/>
    <property type="match status" value="1"/>
</dbReference>
<dbReference type="FunFam" id="1.10.300.10:FF:000001">
    <property type="entry name" value="Adenylosuccinate synthetase"/>
    <property type="match status" value="1"/>
</dbReference>
<dbReference type="FunFam" id="3.90.170.10:FF:000001">
    <property type="entry name" value="Adenylosuccinate synthetase"/>
    <property type="match status" value="1"/>
</dbReference>
<dbReference type="Gene3D" id="3.40.440.10">
    <property type="entry name" value="Adenylosuccinate Synthetase, subunit A, domain 1"/>
    <property type="match status" value="1"/>
</dbReference>
<dbReference type="Gene3D" id="1.10.300.10">
    <property type="entry name" value="Adenylosuccinate Synthetase, subunit A, domain 2"/>
    <property type="match status" value="1"/>
</dbReference>
<dbReference type="Gene3D" id="3.90.170.10">
    <property type="entry name" value="Adenylosuccinate Synthetase, subunit A, domain 3"/>
    <property type="match status" value="1"/>
</dbReference>
<dbReference type="HAMAP" id="MF_00011">
    <property type="entry name" value="Adenylosucc_synth"/>
    <property type="match status" value="1"/>
</dbReference>
<dbReference type="InterPro" id="IPR018220">
    <property type="entry name" value="Adenylosuccin_syn_GTP-bd"/>
</dbReference>
<dbReference type="InterPro" id="IPR033128">
    <property type="entry name" value="Adenylosuccin_syn_Lys_AS"/>
</dbReference>
<dbReference type="InterPro" id="IPR042109">
    <property type="entry name" value="Adenylosuccinate_synth_dom1"/>
</dbReference>
<dbReference type="InterPro" id="IPR042110">
    <property type="entry name" value="Adenylosuccinate_synth_dom2"/>
</dbReference>
<dbReference type="InterPro" id="IPR042111">
    <property type="entry name" value="Adenylosuccinate_synth_dom3"/>
</dbReference>
<dbReference type="InterPro" id="IPR001114">
    <property type="entry name" value="Adenylosuccinate_synthetase"/>
</dbReference>
<dbReference type="InterPro" id="IPR027417">
    <property type="entry name" value="P-loop_NTPase"/>
</dbReference>
<dbReference type="NCBIfam" id="NF002223">
    <property type="entry name" value="PRK01117.1"/>
    <property type="match status" value="1"/>
</dbReference>
<dbReference type="NCBIfam" id="TIGR00184">
    <property type="entry name" value="purA"/>
    <property type="match status" value="1"/>
</dbReference>
<dbReference type="PANTHER" id="PTHR11846">
    <property type="entry name" value="ADENYLOSUCCINATE SYNTHETASE"/>
    <property type="match status" value="1"/>
</dbReference>
<dbReference type="PANTHER" id="PTHR11846:SF0">
    <property type="entry name" value="ADENYLOSUCCINATE SYNTHETASE"/>
    <property type="match status" value="1"/>
</dbReference>
<dbReference type="Pfam" id="PF00709">
    <property type="entry name" value="Adenylsucc_synt"/>
    <property type="match status" value="1"/>
</dbReference>
<dbReference type="SMART" id="SM00788">
    <property type="entry name" value="Adenylsucc_synt"/>
    <property type="match status" value="1"/>
</dbReference>
<dbReference type="SUPFAM" id="SSF52540">
    <property type="entry name" value="P-loop containing nucleoside triphosphate hydrolases"/>
    <property type="match status" value="1"/>
</dbReference>
<dbReference type="PROSITE" id="PS01266">
    <property type="entry name" value="ADENYLOSUCCIN_SYN_1"/>
    <property type="match status" value="1"/>
</dbReference>
<dbReference type="PROSITE" id="PS00513">
    <property type="entry name" value="ADENYLOSUCCIN_SYN_2"/>
    <property type="match status" value="1"/>
</dbReference>
<accession>A4XML6</accession>